<gene>
    <name evidence="1" type="primary">lolD</name>
    <name type="ordered locus">lpl2210</name>
</gene>
<dbReference type="EC" id="7.6.2.-" evidence="1"/>
<dbReference type="EMBL" id="CR628337">
    <property type="protein sequence ID" value="CAH16450.1"/>
    <property type="molecule type" value="Genomic_DNA"/>
</dbReference>
<dbReference type="RefSeq" id="WP_011216186.1">
    <property type="nucleotide sequence ID" value="NC_006369.1"/>
</dbReference>
<dbReference type="SMR" id="Q5WUF8"/>
<dbReference type="KEGG" id="lpf:lpl2210"/>
<dbReference type="LegioList" id="lpl2210"/>
<dbReference type="HOGENOM" id="CLU_000604_1_22_6"/>
<dbReference type="Proteomes" id="UP000002517">
    <property type="component" value="Chromosome"/>
</dbReference>
<dbReference type="GO" id="GO:0005886">
    <property type="term" value="C:plasma membrane"/>
    <property type="evidence" value="ECO:0007669"/>
    <property type="project" value="UniProtKB-SubCell"/>
</dbReference>
<dbReference type="GO" id="GO:0005524">
    <property type="term" value="F:ATP binding"/>
    <property type="evidence" value="ECO:0007669"/>
    <property type="project" value="UniProtKB-KW"/>
</dbReference>
<dbReference type="GO" id="GO:0016887">
    <property type="term" value="F:ATP hydrolysis activity"/>
    <property type="evidence" value="ECO:0007669"/>
    <property type="project" value="InterPro"/>
</dbReference>
<dbReference type="GO" id="GO:0022857">
    <property type="term" value="F:transmembrane transporter activity"/>
    <property type="evidence" value="ECO:0007669"/>
    <property type="project" value="TreeGrafter"/>
</dbReference>
<dbReference type="GO" id="GO:0044874">
    <property type="term" value="P:lipoprotein localization to outer membrane"/>
    <property type="evidence" value="ECO:0007669"/>
    <property type="project" value="TreeGrafter"/>
</dbReference>
<dbReference type="GO" id="GO:0089705">
    <property type="term" value="P:protein localization to outer membrane"/>
    <property type="evidence" value="ECO:0007669"/>
    <property type="project" value="TreeGrafter"/>
</dbReference>
<dbReference type="CDD" id="cd03255">
    <property type="entry name" value="ABC_MJ0796_LolCDE_FtsE"/>
    <property type="match status" value="1"/>
</dbReference>
<dbReference type="FunFam" id="3.40.50.300:FF:000230">
    <property type="entry name" value="Lipoprotein-releasing system ATP-binding protein LolD"/>
    <property type="match status" value="1"/>
</dbReference>
<dbReference type="Gene3D" id="3.40.50.300">
    <property type="entry name" value="P-loop containing nucleotide triphosphate hydrolases"/>
    <property type="match status" value="1"/>
</dbReference>
<dbReference type="InterPro" id="IPR003593">
    <property type="entry name" value="AAA+_ATPase"/>
</dbReference>
<dbReference type="InterPro" id="IPR003439">
    <property type="entry name" value="ABC_transporter-like_ATP-bd"/>
</dbReference>
<dbReference type="InterPro" id="IPR017871">
    <property type="entry name" value="ABC_transporter-like_CS"/>
</dbReference>
<dbReference type="InterPro" id="IPR015854">
    <property type="entry name" value="ABC_transpr_LolD-like"/>
</dbReference>
<dbReference type="InterPro" id="IPR011924">
    <property type="entry name" value="LolD_lipo_ATP-bd"/>
</dbReference>
<dbReference type="InterPro" id="IPR017911">
    <property type="entry name" value="MacB-like_ATP-bd"/>
</dbReference>
<dbReference type="InterPro" id="IPR027417">
    <property type="entry name" value="P-loop_NTPase"/>
</dbReference>
<dbReference type="NCBIfam" id="TIGR02211">
    <property type="entry name" value="LolD_lipo_ex"/>
    <property type="match status" value="1"/>
</dbReference>
<dbReference type="PANTHER" id="PTHR24220">
    <property type="entry name" value="IMPORT ATP-BINDING PROTEIN"/>
    <property type="match status" value="1"/>
</dbReference>
<dbReference type="PANTHER" id="PTHR24220:SF689">
    <property type="entry name" value="LIPOPROTEIN-RELEASING SYSTEM ATP-BINDING PROTEIN LOLD"/>
    <property type="match status" value="1"/>
</dbReference>
<dbReference type="Pfam" id="PF00005">
    <property type="entry name" value="ABC_tran"/>
    <property type="match status" value="1"/>
</dbReference>
<dbReference type="SMART" id="SM00382">
    <property type="entry name" value="AAA"/>
    <property type="match status" value="1"/>
</dbReference>
<dbReference type="SUPFAM" id="SSF52540">
    <property type="entry name" value="P-loop containing nucleoside triphosphate hydrolases"/>
    <property type="match status" value="1"/>
</dbReference>
<dbReference type="PROSITE" id="PS00211">
    <property type="entry name" value="ABC_TRANSPORTER_1"/>
    <property type="match status" value="1"/>
</dbReference>
<dbReference type="PROSITE" id="PS50893">
    <property type="entry name" value="ABC_TRANSPORTER_2"/>
    <property type="match status" value="1"/>
</dbReference>
<dbReference type="PROSITE" id="PS51244">
    <property type="entry name" value="LOLD"/>
    <property type="match status" value="1"/>
</dbReference>
<sequence>MNDIILTSQKLYKSYHDGTSTVEVLKGVDLAITKGDRIAIIGPSGSGKSTLLHLLGGLDKPTSGLITLGNVNWQKINEKQRCQLRNQQLGFVYQFHHLLPEFTALENVMMPLLLAGMAVKDAEEKVINMLEQVGLKPRLTHKPAQLSGGERQRVAIARALVHQPHCVLADEPTGNLDEATASKVFDLMLELNKKMNTALVIVTHDQRIAERMDRVLVLHEGSLYARE</sequence>
<protein>
    <recommendedName>
        <fullName evidence="1">Lipoprotein-releasing system ATP-binding protein LolD</fullName>
        <ecNumber evidence="1">7.6.2.-</ecNumber>
    </recommendedName>
</protein>
<organism>
    <name type="scientific">Legionella pneumophila (strain Lens)</name>
    <dbReference type="NCBI Taxonomy" id="297245"/>
    <lineage>
        <taxon>Bacteria</taxon>
        <taxon>Pseudomonadati</taxon>
        <taxon>Pseudomonadota</taxon>
        <taxon>Gammaproteobacteria</taxon>
        <taxon>Legionellales</taxon>
        <taxon>Legionellaceae</taxon>
        <taxon>Legionella</taxon>
    </lineage>
</organism>
<proteinExistence type="inferred from homology"/>
<reference key="1">
    <citation type="journal article" date="2004" name="Nat. Genet.">
        <title>Evidence in the Legionella pneumophila genome for exploitation of host cell functions and high genome plasticity.</title>
        <authorList>
            <person name="Cazalet C."/>
            <person name="Rusniok C."/>
            <person name="Brueggemann H."/>
            <person name="Zidane N."/>
            <person name="Magnier A."/>
            <person name="Ma L."/>
            <person name="Tichit M."/>
            <person name="Jarraud S."/>
            <person name="Bouchier C."/>
            <person name="Vandenesch F."/>
            <person name="Kunst F."/>
            <person name="Etienne J."/>
            <person name="Glaser P."/>
            <person name="Buchrieser C."/>
        </authorList>
    </citation>
    <scope>NUCLEOTIDE SEQUENCE [LARGE SCALE GENOMIC DNA]</scope>
    <source>
        <strain>Lens</strain>
    </source>
</reference>
<keyword id="KW-0067">ATP-binding</keyword>
<keyword id="KW-0997">Cell inner membrane</keyword>
<keyword id="KW-1003">Cell membrane</keyword>
<keyword id="KW-0472">Membrane</keyword>
<keyword id="KW-0547">Nucleotide-binding</keyword>
<keyword id="KW-1278">Translocase</keyword>
<keyword id="KW-0813">Transport</keyword>
<evidence type="ECO:0000255" key="1">
    <source>
        <dbReference type="HAMAP-Rule" id="MF_01708"/>
    </source>
</evidence>
<accession>Q5WUF8</accession>
<comment type="function">
    <text evidence="1">Part of the ABC transporter complex LolCDE involved in the translocation of mature outer membrane-directed lipoproteins, from the inner membrane to the periplasmic chaperone, LolA. Responsible for the formation of the LolA-lipoprotein complex in an ATP-dependent manner.</text>
</comment>
<comment type="subunit">
    <text evidence="1">The complex is composed of two ATP-binding proteins (LolD) and two transmembrane proteins (LolC and LolE).</text>
</comment>
<comment type="subcellular location">
    <subcellularLocation>
        <location evidence="1">Cell inner membrane</location>
        <topology evidence="1">Peripheral membrane protein</topology>
    </subcellularLocation>
</comment>
<comment type="similarity">
    <text evidence="1">Belongs to the ABC transporter superfamily. Lipoprotein translocase (TC 3.A.1.125) family.</text>
</comment>
<feature type="chain" id="PRO_0000272099" description="Lipoprotein-releasing system ATP-binding protein LolD">
    <location>
        <begin position="1"/>
        <end position="227"/>
    </location>
</feature>
<feature type="domain" description="ABC transporter" evidence="1">
    <location>
        <begin position="6"/>
        <end position="227"/>
    </location>
</feature>
<feature type="binding site" evidence="1">
    <location>
        <begin position="42"/>
        <end position="49"/>
    </location>
    <ligand>
        <name>ATP</name>
        <dbReference type="ChEBI" id="CHEBI:30616"/>
    </ligand>
</feature>
<name>LOLD_LEGPL</name>